<dbReference type="EMBL" id="D88802">
    <property type="protein sequence ID" value="BAA19722.1"/>
    <property type="molecule type" value="Genomic_DNA"/>
</dbReference>
<dbReference type="EMBL" id="AL009126">
    <property type="protein sequence ID" value="CAB12417.1"/>
    <property type="molecule type" value="Genomic_DNA"/>
</dbReference>
<dbReference type="PIR" id="B69787">
    <property type="entry name" value="B69787"/>
</dbReference>
<dbReference type="RefSeq" id="NP_388479.1">
    <property type="nucleotide sequence ID" value="NC_000964.3"/>
</dbReference>
<dbReference type="RefSeq" id="WP_003234072.1">
    <property type="nucleotide sequence ID" value="NZ_OZ025638.1"/>
</dbReference>
<dbReference type="SMR" id="O05522"/>
<dbReference type="FunCoup" id="O05522">
    <property type="interactions" value="32"/>
</dbReference>
<dbReference type="IntAct" id="O05522">
    <property type="interactions" value="16"/>
</dbReference>
<dbReference type="STRING" id="224308.BSU05980"/>
<dbReference type="TCDB" id="2.A.64.3.2">
    <property type="family name" value="the twin arginine targeting (tat) family"/>
</dbReference>
<dbReference type="PaxDb" id="224308-BSU05980"/>
<dbReference type="EnsemblBacteria" id="CAB12417">
    <property type="protein sequence ID" value="CAB12417"/>
    <property type="gene ID" value="BSU_05980"/>
</dbReference>
<dbReference type="GeneID" id="86874964"/>
<dbReference type="GeneID" id="939878"/>
<dbReference type="KEGG" id="bsu:BSU05980"/>
<dbReference type="PATRIC" id="fig|224308.179.peg.643"/>
<dbReference type="eggNOG" id="COG1826">
    <property type="taxonomic scope" value="Bacteria"/>
</dbReference>
<dbReference type="InParanoid" id="O05522"/>
<dbReference type="OrthoDB" id="9800908at2"/>
<dbReference type="PhylomeDB" id="O05522"/>
<dbReference type="BioCyc" id="BSUB:BSU05980-MONOMER"/>
<dbReference type="Proteomes" id="UP000001570">
    <property type="component" value="Chromosome"/>
</dbReference>
<dbReference type="GO" id="GO:0005829">
    <property type="term" value="C:cytosol"/>
    <property type="evidence" value="ECO:0007669"/>
    <property type="project" value="UniProtKB-SubCell"/>
</dbReference>
<dbReference type="GO" id="GO:0033281">
    <property type="term" value="C:TAT protein transport complex"/>
    <property type="evidence" value="ECO:0007669"/>
    <property type="project" value="UniProtKB-UniRule"/>
</dbReference>
<dbReference type="GO" id="GO:0008320">
    <property type="term" value="F:protein transmembrane transporter activity"/>
    <property type="evidence" value="ECO:0007669"/>
    <property type="project" value="UniProtKB-UniRule"/>
</dbReference>
<dbReference type="GO" id="GO:0043953">
    <property type="term" value="P:protein transport by the Tat complex"/>
    <property type="evidence" value="ECO:0007669"/>
    <property type="project" value="UniProtKB-UniRule"/>
</dbReference>
<dbReference type="Gene3D" id="1.20.5.3310">
    <property type="match status" value="1"/>
</dbReference>
<dbReference type="HAMAP" id="MF_00236">
    <property type="entry name" value="TatA_E"/>
    <property type="match status" value="1"/>
</dbReference>
<dbReference type="InterPro" id="IPR003369">
    <property type="entry name" value="TatA/B/E"/>
</dbReference>
<dbReference type="InterPro" id="IPR006312">
    <property type="entry name" value="TatA/E"/>
</dbReference>
<dbReference type="NCBIfam" id="NF011430">
    <property type="entry name" value="PRK14861.1"/>
    <property type="match status" value="1"/>
</dbReference>
<dbReference type="NCBIfam" id="TIGR01411">
    <property type="entry name" value="tatAE"/>
    <property type="match status" value="1"/>
</dbReference>
<dbReference type="PANTHER" id="PTHR42982">
    <property type="entry name" value="SEC-INDEPENDENT PROTEIN TRANSLOCASE PROTEIN TATA"/>
    <property type="match status" value="1"/>
</dbReference>
<dbReference type="PANTHER" id="PTHR42982:SF1">
    <property type="entry name" value="SEC-INDEPENDENT PROTEIN TRANSLOCASE PROTEIN TATA"/>
    <property type="match status" value="1"/>
</dbReference>
<dbReference type="Pfam" id="PF02416">
    <property type="entry name" value="TatA_B_E"/>
    <property type="match status" value="1"/>
</dbReference>
<gene>
    <name evidence="1" type="primary">tatAy</name>
    <name type="synonym">ydiI</name>
    <name type="ordered locus">BSU05980</name>
</gene>
<keyword id="KW-1003">Cell membrane</keyword>
<keyword id="KW-0963">Cytoplasm</keyword>
<keyword id="KW-0472">Membrane</keyword>
<keyword id="KW-0653">Protein transport</keyword>
<keyword id="KW-1185">Reference proteome</keyword>
<keyword id="KW-0811">Translocation</keyword>
<keyword id="KW-0812">Transmembrane</keyword>
<keyword id="KW-1133">Transmembrane helix</keyword>
<keyword id="KW-0813">Transport</keyword>
<comment type="function">
    <text evidence="1 2">Part of the twin-arginine translocation (Tat) system that transports large folded proteins containing a characteristic twin-arginine motif in their signal peptide across membranes. TatA could form the protein-conducting channel of the Tat system. Required for YwbN secretion.</text>
</comment>
<comment type="subunit">
    <text evidence="1 2">Forms a complex with TatCy. Two types of complexes exist: one composed of TatAy and TatCy, and another composed only of TatAy. Cytosolic TatA forms large complexes or aggregates.</text>
</comment>
<comment type="subcellular location">
    <subcellularLocation>
        <location evidence="1 2">Cell membrane</location>
        <topology evidence="1 2">Single-pass membrane protein</topology>
    </subcellularLocation>
    <subcellularLocation>
        <location evidence="2">Cytoplasm</location>
        <location evidence="2">Cytosol</location>
    </subcellularLocation>
</comment>
<comment type="miscellaneous">
    <text>B.subtilis possesses two minimal, substrate-specific, Tat translocases: TatAd-TatCd and TatAy-TatCy, each one composed of a TatA and a TatC protein. TatA is bifunctional and performs the function of both the TatA and TatB proteins of Gram-negative organisms.</text>
</comment>
<comment type="similarity">
    <text evidence="1">Belongs to the TatA/E family.</text>
</comment>
<sequence>MPIGPGSLAVIAIVALIIFGPKKLPELGKAAGDTLREFKNATKGLTSDEEEKKKEDQ</sequence>
<evidence type="ECO:0000255" key="1">
    <source>
        <dbReference type="HAMAP-Rule" id="MF_00236"/>
    </source>
</evidence>
<evidence type="ECO:0000269" key="2">
    <source>
    </source>
</evidence>
<protein>
    <recommendedName>
        <fullName evidence="1">Sec-independent protein translocase protein TatAy</fullName>
    </recommendedName>
</protein>
<reference key="1">
    <citation type="journal article" date="1997" name="Microbiology">
        <title>Nucleotide sequence and analysis of the phoB-rrnE-groESL region of the Bacillus subtilis chromosome.</title>
        <authorList>
            <person name="Sadaie Y."/>
            <person name="Yata K."/>
            <person name="Fujita M."/>
            <person name="Sagai H."/>
            <person name="Itaya M."/>
            <person name="Kasahara Y."/>
            <person name="Ogasawara N."/>
        </authorList>
    </citation>
    <scope>NUCLEOTIDE SEQUENCE [GENOMIC DNA]</scope>
    <source>
        <strain>168</strain>
    </source>
</reference>
<reference key="2">
    <citation type="journal article" date="1997" name="Nature">
        <title>The complete genome sequence of the Gram-positive bacterium Bacillus subtilis.</title>
        <authorList>
            <person name="Kunst F."/>
            <person name="Ogasawara N."/>
            <person name="Moszer I."/>
            <person name="Albertini A.M."/>
            <person name="Alloni G."/>
            <person name="Azevedo V."/>
            <person name="Bertero M.G."/>
            <person name="Bessieres P."/>
            <person name="Bolotin A."/>
            <person name="Borchert S."/>
            <person name="Borriss R."/>
            <person name="Boursier L."/>
            <person name="Brans A."/>
            <person name="Braun M."/>
            <person name="Brignell S.C."/>
            <person name="Bron S."/>
            <person name="Brouillet S."/>
            <person name="Bruschi C.V."/>
            <person name="Caldwell B."/>
            <person name="Capuano V."/>
            <person name="Carter N.M."/>
            <person name="Choi S.-K."/>
            <person name="Codani J.-J."/>
            <person name="Connerton I.F."/>
            <person name="Cummings N.J."/>
            <person name="Daniel R.A."/>
            <person name="Denizot F."/>
            <person name="Devine K.M."/>
            <person name="Duesterhoeft A."/>
            <person name="Ehrlich S.D."/>
            <person name="Emmerson P.T."/>
            <person name="Entian K.-D."/>
            <person name="Errington J."/>
            <person name="Fabret C."/>
            <person name="Ferrari E."/>
            <person name="Foulger D."/>
            <person name="Fritz C."/>
            <person name="Fujita M."/>
            <person name="Fujita Y."/>
            <person name="Fuma S."/>
            <person name="Galizzi A."/>
            <person name="Galleron N."/>
            <person name="Ghim S.-Y."/>
            <person name="Glaser P."/>
            <person name="Goffeau A."/>
            <person name="Golightly E.J."/>
            <person name="Grandi G."/>
            <person name="Guiseppi G."/>
            <person name="Guy B.J."/>
            <person name="Haga K."/>
            <person name="Haiech J."/>
            <person name="Harwood C.R."/>
            <person name="Henaut A."/>
            <person name="Hilbert H."/>
            <person name="Holsappel S."/>
            <person name="Hosono S."/>
            <person name="Hullo M.-F."/>
            <person name="Itaya M."/>
            <person name="Jones L.-M."/>
            <person name="Joris B."/>
            <person name="Karamata D."/>
            <person name="Kasahara Y."/>
            <person name="Klaerr-Blanchard M."/>
            <person name="Klein C."/>
            <person name="Kobayashi Y."/>
            <person name="Koetter P."/>
            <person name="Koningstein G."/>
            <person name="Krogh S."/>
            <person name="Kumano M."/>
            <person name="Kurita K."/>
            <person name="Lapidus A."/>
            <person name="Lardinois S."/>
            <person name="Lauber J."/>
            <person name="Lazarevic V."/>
            <person name="Lee S.-M."/>
            <person name="Levine A."/>
            <person name="Liu H."/>
            <person name="Masuda S."/>
            <person name="Mauel C."/>
            <person name="Medigue C."/>
            <person name="Medina N."/>
            <person name="Mellado R.P."/>
            <person name="Mizuno M."/>
            <person name="Moestl D."/>
            <person name="Nakai S."/>
            <person name="Noback M."/>
            <person name="Noone D."/>
            <person name="O'Reilly M."/>
            <person name="Ogawa K."/>
            <person name="Ogiwara A."/>
            <person name="Oudega B."/>
            <person name="Park S.-H."/>
            <person name="Parro V."/>
            <person name="Pohl T.M."/>
            <person name="Portetelle D."/>
            <person name="Porwollik S."/>
            <person name="Prescott A.M."/>
            <person name="Presecan E."/>
            <person name="Pujic P."/>
            <person name="Purnelle B."/>
            <person name="Rapoport G."/>
            <person name="Rey M."/>
            <person name="Reynolds S."/>
            <person name="Rieger M."/>
            <person name="Rivolta C."/>
            <person name="Rocha E."/>
            <person name="Roche B."/>
            <person name="Rose M."/>
            <person name="Sadaie Y."/>
            <person name="Sato T."/>
            <person name="Scanlan E."/>
            <person name="Schleich S."/>
            <person name="Schroeter R."/>
            <person name="Scoffone F."/>
            <person name="Sekiguchi J."/>
            <person name="Sekowska A."/>
            <person name="Seror S.J."/>
            <person name="Serror P."/>
            <person name="Shin B.-S."/>
            <person name="Soldo B."/>
            <person name="Sorokin A."/>
            <person name="Tacconi E."/>
            <person name="Takagi T."/>
            <person name="Takahashi H."/>
            <person name="Takemaru K."/>
            <person name="Takeuchi M."/>
            <person name="Tamakoshi A."/>
            <person name="Tanaka T."/>
            <person name="Terpstra P."/>
            <person name="Tognoni A."/>
            <person name="Tosato V."/>
            <person name="Uchiyama S."/>
            <person name="Vandenbol M."/>
            <person name="Vannier F."/>
            <person name="Vassarotti A."/>
            <person name="Viari A."/>
            <person name="Wambutt R."/>
            <person name="Wedler E."/>
            <person name="Wedler H."/>
            <person name="Weitzenegger T."/>
            <person name="Winters P."/>
            <person name="Wipat A."/>
            <person name="Yamamoto H."/>
            <person name="Yamane K."/>
            <person name="Yasumoto K."/>
            <person name="Yata K."/>
            <person name="Yoshida K."/>
            <person name="Yoshikawa H.-F."/>
            <person name="Zumstein E."/>
            <person name="Yoshikawa H."/>
            <person name="Danchin A."/>
        </authorList>
    </citation>
    <scope>NUCLEOTIDE SEQUENCE [LARGE SCALE GENOMIC DNA]</scope>
    <source>
        <strain>168</strain>
    </source>
</reference>
<reference key="3">
    <citation type="journal article" date="2000" name="J. Biol. Chem.">
        <title>TatC is a specificity determinant for protein secretion via the twin-arginine translocation pathway.</title>
        <authorList>
            <person name="Jongbloed J.D.H."/>
            <person name="Martin U."/>
            <person name="Antelmann H."/>
            <person name="Hecker M."/>
            <person name="Tjalsma H."/>
            <person name="Venema G."/>
            <person name="Bron S."/>
            <person name="van Dijl J.M."/>
            <person name="Mueller J."/>
        </authorList>
    </citation>
    <scope>IDENTIFICATION OF THE TAT GENES</scope>
</reference>
<reference key="4">
    <citation type="journal article" date="2004" name="Mol. Microbiol.">
        <title>Two minimal Tat translocases in Bacillus.</title>
        <authorList>
            <person name="Jongbloed J.D.H."/>
            <person name="Grieger U."/>
            <person name="Antelmann H."/>
            <person name="Hecker M."/>
            <person name="Nijland R."/>
            <person name="Bron S."/>
            <person name="van Dijl J.M."/>
        </authorList>
    </citation>
    <scope>EXPORT OF THE YWBN PROTEIN</scope>
    <scope>CHARACTERIZATION OF THE TWO TAT TRANSLOCASE SYSTEMS</scope>
</reference>
<reference key="5">
    <citation type="journal article" date="2009" name="FEBS J.">
        <title>The twin-arginine translocation (Tat) systems from Bacillus subtilis display a conserved mode of complex organization and similar substrate recognition requirements.</title>
        <authorList>
            <person name="Barnett J.P."/>
            <person name="van der Ploeg R."/>
            <person name="Eijlander R.T."/>
            <person name="Nenninger A."/>
            <person name="Mendel S."/>
            <person name="Rozeboom R."/>
            <person name="Kuipers O.P."/>
            <person name="van Dijl J.M."/>
            <person name="Robinson C."/>
        </authorList>
    </citation>
    <scope>FUNCTION</scope>
    <scope>SUBUNIT</scope>
    <scope>SUBCELLULAR LOCATION</scope>
</reference>
<feature type="chain" id="PRO_0000097980" description="Sec-independent protein translocase protein TatAy">
    <location>
        <begin position="1"/>
        <end position="57"/>
    </location>
</feature>
<feature type="transmembrane region" description="Helical" evidence="1">
    <location>
        <begin position="1"/>
        <end position="21"/>
    </location>
</feature>
<organism>
    <name type="scientific">Bacillus subtilis (strain 168)</name>
    <dbReference type="NCBI Taxonomy" id="224308"/>
    <lineage>
        <taxon>Bacteria</taxon>
        <taxon>Bacillati</taxon>
        <taxon>Bacillota</taxon>
        <taxon>Bacilli</taxon>
        <taxon>Bacillales</taxon>
        <taxon>Bacillaceae</taxon>
        <taxon>Bacillus</taxon>
    </lineage>
</organism>
<name>TATAY_BACSU</name>
<accession>O05522</accession>
<accession>Q797D3</accession>
<proteinExistence type="evidence at protein level"/>